<dbReference type="EMBL" id="AY382899">
    <property type="protein sequence ID" value="AAR24368.1"/>
    <property type="molecule type" value="mRNA"/>
</dbReference>
<dbReference type="EMBL" id="BC052604">
    <property type="protein sequence ID" value="AAH52604.1"/>
    <property type="molecule type" value="mRNA"/>
</dbReference>
<dbReference type="EMBL" id="BC137486">
    <property type="protein sequence ID" value="AAI37487.1"/>
    <property type="molecule type" value="mRNA"/>
</dbReference>
<dbReference type="EMBL" id="BC137487">
    <property type="protein sequence ID" value="AAI37488.1"/>
    <property type="molecule type" value="mRNA"/>
</dbReference>
<dbReference type="EMBL" id="AF514992">
    <property type="protein sequence ID" value="AAM76703.1"/>
    <property type="molecule type" value="mRNA"/>
</dbReference>
<dbReference type="CCDS" id="CCDS32575.1">
    <molecule id="Q7Z7K6-3"/>
</dbReference>
<dbReference type="RefSeq" id="NP_859067.2">
    <molecule id="Q7Z7K6-3"/>
    <property type="nucleotide sequence ID" value="NM_181716.3"/>
</dbReference>
<dbReference type="SMR" id="Q7Z7K6"/>
<dbReference type="BioGRID" id="128365">
    <property type="interactions" value="129"/>
</dbReference>
<dbReference type="FunCoup" id="Q7Z7K6">
    <property type="interactions" value="620"/>
</dbReference>
<dbReference type="IntAct" id="Q7Z7K6">
    <property type="interactions" value="82"/>
</dbReference>
<dbReference type="MINT" id="Q7Z7K6"/>
<dbReference type="STRING" id="9606.ENSP00000299736"/>
<dbReference type="GlyCosmos" id="Q7Z7K6">
    <property type="glycosylation" value="5 sites, 2 glycans"/>
</dbReference>
<dbReference type="GlyGen" id="Q7Z7K6">
    <property type="glycosylation" value="5 sites, 2 O-linked glycans (5 sites)"/>
</dbReference>
<dbReference type="iPTMnet" id="Q7Z7K6"/>
<dbReference type="PhosphoSitePlus" id="Q7Z7K6"/>
<dbReference type="SwissPalm" id="Q7Z7K6"/>
<dbReference type="BioMuta" id="CENPV"/>
<dbReference type="DMDM" id="74750244"/>
<dbReference type="jPOST" id="Q7Z7K6"/>
<dbReference type="MassIVE" id="Q7Z7K6"/>
<dbReference type="PaxDb" id="9606-ENSP00000299736"/>
<dbReference type="PeptideAtlas" id="Q7Z7K6"/>
<dbReference type="ProteomicsDB" id="69557">
    <molecule id="Q7Z7K6-1"/>
</dbReference>
<dbReference type="ProteomicsDB" id="69558">
    <molecule id="Q7Z7K6-2"/>
</dbReference>
<dbReference type="ProteomicsDB" id="69559">
    <molecule id="Q7Z7K6-3"/>
</dbReference>
<dbReference type="Pumba" id="Q7Z7K6"/>
<dbReference type="Antibodypedia" id="25303">
    <property type="antibodies" value="74 antibodies from 22 providers"/>
</dbReference>
<dbReference type="DNASU" id="201161"/>
<dbReference type="Ensembl" id="ENST00000299736.5">
    <molecule id="Q7Z7K6-3"/>
    <property type="protein sequence ID" value="ENSP00000299736.4"/>
    <property type="gene ID" value="ENSG00000166582.11"/>
</dbReference>
<dbReference type="GeneID" id="201161"/>
<dbReference type="KEGG" id="hsa:201161"/>
<dbReference type="MANE-Select" id="ENST00000299736.5">
    <molecule id="Q7Z7K6-3"/>
    <property type="protein sequence ID" value="ENSP00000299736.4"/>
    <property type="RefSeq nucleotide sequence ID" value="NM_181716.3"/>
    <property type="RefSeq protein sequence ID" value="NP_859067.2"/>
</dbReference>
<dbReference type="UCSC" id="uc002gpw.4">
    <molecule id="Q7Z7K6-1"/>
    <property type="organism name" value="human"/>
</dbReference>
<dbReference type="AGR" id="HGNC:29920"/>
<dbReference type="CTD" id="201161"/>
<dbReference type="DisGeNET" id="201161"/>
<dbReference type="GeneCards" id="CENPV"/>
<dbReference type="HGNC" id="HGNC:29920">
    <property type="gene designation" value="CENPV"/>
</dbReference>
<dbReference type="HPA" id="ENSG00000166582">
    <property type="expression patterns" value="Low tissue specificity"/>
</dbReference>
<dbReference type="MIM" id="608139">
    <property type="type" value="gene"/>
</dbReference>
<dbReference type="neXtProt" id="NX_Q7Z7K6"/>
<dbReference type="OpenTargets" id="ENSG00000166582"/>
<dbReference type="PharmGKB" id="PA164717842"/>
<dbReference type="VEuPathDB" id="HostDB:ENSG00000166582"/>
<dbReference type="eggNOG" id="KOG4192">
    <property type="taxonomic scope" value="Eukaryota"/>
</dbReference>
<dbReference type="GeneTree" id="ENSGT00390000003183"/>
<dbReference type="HOGENOM" id="CLU_087799_0_0_1"/>
<dbReference type="InParanoid" id="Q7Z7K6"/>
<dbReference type="OMA" id="FNGNEWE"/>
<dbReference type="OrthoDB" id="2993351at2759"/>
<dbReference type="PAN-GO" id="Q7Z7K6">
    <property type="GO annotations" value="6 GO annotations based on evolutionary models"/>
</dbReference>
<dbReference type="PhylomeDB" id="Q7Z7K6"/>
<dbReference type="TreeFam" id="TF313636"/>
<dbReference type="PathwayCommons" id="Q7Z7K6"/>
<dbReference type="SignaLink" id="Q7Z7K6"/>
<dbReference type="BioGRID-ORCS" id="201161">
    <property type="hits" value="21 hits in 1162 CRISPR screens"/>
</dbReference>
<dbReference type="ChiTaRS" id="CENPV">
    <property type="organism name" value="human"/>
</dbReference>
<dbReference type="GenomeRNAi" id="201161"/>
<dbReference type="Pharos" id="Q7Z7K6">
    <property type="development level" value="Tbio"/>
</dbReference>
<dbReference type="PRO" id="PR:Q7Z7K6"/>
<dbReference type="Proteomes" id="UP000005640">
    <property type="component" value="Chromosome 17"/>
</dbReference>
<dbReference type="RNAct" id="Q7Z7K6">
    <property type="molecule type" value="protein"/>
</dbReference>
<dbReference type="Bgee" id="ENSG00000166582">
    <property type="expression patterns" value="Expressed in ganglionic eminence and 161 other cell types or tissues"/>
</dbReference>
<dbReference type="ExpressionAtlas" id="Q7Z7K6">
    <property type="expression patterns" value="baseline and differential"/>
</dbReference>
<dbReference type="GO" id="GO:0005829">
    <property type="term" value="C:cytosol"/>
    <property type="evidence" value="ECO:0000314"/>
    <property type="project" value="HPA"/>
</dbReference>
<dbReference type="GO" id="GO:0000776">
    <property type="term" value="C:kinetochore"/>
    <property type="evidence" value="ECO:0000314"/>
    <property type="project" value="UniProtKB"/>
</dbReference>
<dbReference type="GO" id="GO:0015630">
    <property type="term" value="C:microtubule cytoskeleton"/>
    <property type="evidence" value="ECO:0000314"/>
    <property type="project" value="MGI"/>
</dbReference>
<dbReference type="GO" id="GO:0030496">
    <property type="term" value="C:midbody"/>
    <property type="evidence" value="ECO:0000314"/>
    <property type="project" value="HPA"/>
</dbReference>
<dbReference type="GO" id="GO:0031965">
    <property type="term" value="C:nuclear membrane"/>
    <property type="evidence" value="ECO:0000314"/>
    <property type="project" value="HPA"/>
</dbReference>
<dbReference type="GO" id="GO:0005654">
    <property type="term" value="C:nucleoplasm"/>
    <property type="evidence" value="ECO:0000314"/>
    <property type="project" value="HPA"/>
</dbReference>
<dbReference type="GO" id="GO:0005634">
    <property type="term" value="C:nucleus"/>
    <property type="evidence" value="ECO:0000314"/>
    <property type="project" value="UniProtKB"/>
</dbReference>
<dbReference type="GO" id="GO:0051233">
    <property type="term" value="C:spindle midzone"/>
    <property type="evidence" value="ECO:0000314"/>
    <property type="project" value="UniProtKB"/>
</dbReference>
<dbReference type="GO" id="GO:0016846">
    <property type="term" value="F:carbon-sulfur lyase activity"/>
    <property type="evidence" value="ECO:0007669"/>
    <property type="project" value="InterPro"/>
</dbReference>
<dbReference type="GO" id="GO:0046872">
    <property type="term" value="F:metal ion binding"/>
    <property type="evidence" value="ECO:0007669"/>
    <property type="project" value="UniProtKB-KW"/>
</dbReference>
<dbReference type="GO" id="GO:0001667">
    <property type="term" value="P:ameboidal-type cell migration"/>
    <property type="evidence" value="ECO:0000314"/>
    <property type="project" value="MGI"/>
</dbReference>
<dbReference type="GO" id="GO:0051301">
    <property type="term" value="P:cell division"/>
    <property type="evidence" value="ECO:0007669"/>
    <property type="project" value="UniProtKB-KW"/>
</dbReference>
<dbReference type="GO" id="GO:0034508">
    <property type="term" value="P:centromere complex assembly"/>
    <property type="evidence" value="ECO:0000315"/>
    <property type="project" value="UniProtKB"/>
</dbReference>
<dbReference type="GO" id="GO:0031508">
    <property type="term" value="P:pericentric heterochromatin formation"/>
    <property type="evidence" value="ECO:0000315"/>
    <property type="project" value="UniProtKB"/>
</dbReference>
<dbReference type="GO" id="GO:0032467">
    <property type="term" value="P:positive regulation of cytokinesis"/>
    <property type="evidence" value="ECO:0000315"/>
    <property type="project" value="UniProtKB"/>
</dbReference>
<dbReference type="GO" id="GO:0033044">
    <property type="term" value="P:regulation of chromosome organization"/>
    <property type="evidence" value="ECO:0000315"/>
    <property type="project" value="UniProtKB"/>
</dbReference>
<dbReference type="FunFam" id="2.170.150.70:FF:000001">
    <property type="entry name" value="Centromere protein V"/>
    <property type="match status" value="1"/>
</dbReference>
<dbReference type="Gene3D" id="2.170.150.70">
    <property type="match status" value="1"/>
</dbReference>
<dbReference type="InterPro" id="IPR052355">
    <property type="entry name" value="CENP-V-like"/>
</dbReference>
<dbReference type="InterPro" id="IPR006913">
    <property type="entry name" value="CENP-V/GFA"/>
</dbReference>
<dbReference type="InterPro" id="IPR011057">
    <property type="entry name" value="Mss4-like_sf"/>
</dbReference>
<dbReference type="PANTHER" id="PTHR28620">
    <property type="entry name" value="CENTROMERE PROTEIN V"/>
    <property type="match status" value="1"/>
</dbReference>
<dbReference type="PANTHER" id="PTHR28620:SF4">
    <property type="entry name" value="CENTROMERE PROTEIN V"/>
    <property type="match status" value="1"/>
</dbReference>
<dbReference type="Pfam" id="PF04828">
    <property type="entry name" value="GFA"/>
    <property type="match status" value="1"/>
</dbReference>
<dbReference type="SUPFAM" id="SSF51316">
    <property type="entry name" value="Mss4-like"/>
    <property type="match status" value="1"/>
</dbReference>
<dbReference type="PROSITE" id="PS51891">
    <property type="entry name" value="CENP_V_GFA"/>
    <property type="match status" value="1"/>
</dbReference>
<accession>Q7Z7K6</accession>
<accession>B2RPK2</accession>
<accession>Q3L8N5</accession>
<accession>Q8NFH6</accession>
<reference key="1">
    <citation type="submission" date="2003-09" db="EMBL/GenBank/DDBJ databases">
        <title>Cloning and characterization of a novel splice variant of nuclear protein p30.</title>
        <authorList>
            <person name="Zheng H."/>
            <person name="Xie Y."/>
            <person name="Mao Y."/>
        </authorList>
    </citation>
    <scope>NUCLEOTIDE SEQUENCE [MRNA] (ISOFORM 2)</scope>
</reference>
<reference key="2">
    <citation type="journal article" date="2004" name="Genome Res.">
        <title>The status, quality, and expansion of the NIH full-length cDNA project: the Mammalian Gene Collection (MGC).</title>
        <authorList>
            <consortium name="The MGC Project Team"/>
        </authorList>
    </citation>
    <scope>NUCLEOTIDE SEQUENCE [LARGE SCALE MRNA] (ISOFORMS 1 AND 3)</scope>
    <source>
        <tissue>Blood</tissue>
    </source>
</reference>
<reference key="3">
    <citation type="journal article" date="2002" name="J. Cell Biol.">
        <title>Proteomic analysis of the mammalian nuclear pore complex.</title>
        <authorList>
            <person name="Cronshaw J.M."/>
            <person name="Krutchinsky A.N."/>
            <person name="Zhang W."/>
            <person name="Chait B.T."/>
            <person name="Matunis M.J."/>
        </authorList>
    </citation>
    <scope>NUCLEOTIDE SEQUENCE [MRNA] OF 2-275 (ISOFORM 3)</scope>
    <scope>SUBCELLULAR LOCATION</scope>
</reference>
<reference key="4">
    <citation type="journal article" date="2008" name="EMBO J.">
        <title>CENP-V is required for centromere organization, chromosome alignment and cytokinesis.</title>
        <authorList>
            <person name="Tadeu A.M.B."/>
            <person name="Ribeiro S."/>
            <person name="Johnston J."/>
            <person name="Goldberg I."/>
            <person name="Gerloff D."/>
            <person name="Earnshaw W.C."/>
        </authorList>
    </citation>
    <scope>FUNCTION</scope>
    <scope>SUBCELLULAR LOCATION</scope>
    <scope>MUTAGENESIS OF CYS-172; CYS-174 AND CYS-177</scope>
</reference>
<reference key="5">
    <citation type="journal article" date="2008" name="Proc. Natl. Acad. Sci. U.S.A.">
        <title>A quantitative atlas of mitotic phosphorylation.</title>
        <authorList>
            <person name="Dephoure N."/>
            <person name="Zhou C."/>
            <person name="Villen J."/>
            <person name="Beausoleil S.A."/>
            <person name="Bakalarski C.E."/>
            <person name="Elledge S.J."/>
            <person name="Gygi S.P."/>
        </authorList>
    </citation>
    <scope>PHOSPHORYLATION [LARGE SCALE ANALYSIS] AT SER-21</scope>
    <scope>IDENTIFICATION BY MASS SPECTROMETRY [LARGE SCALE ANALYSIS]</scope>
    <source>
        <tissue>Cervix carcinoma</tissue>
    </source>
</reference>
<reference key="6">
    <citation type="journal article" date="2009" name="Sci. Signal.">
        <title>Quantitative phosphoproteomic analysis of T cell receptor signaling reveals system-wide modulation of protein-protein interactions.</title>
        <authorList>
            <person name="Mayya V."/>
            <person name="Lundgren D.H."/>
            <person name="Hwang S.-I."/>
            <person name="Rezaul K."/>
            <person name="Wu L."/>
            <person name="Eng J.K."/>
            <person name="Rodionov V."/>
            <person name="Han D.K."/>
        </authorList>
    </citation>
    <scope>IDENTIFICATION BY MASS SPECTROMETRY [LARGE SCALE ANALYSIS]</scope>
    <source>
        <tissue>Leukemic T-cell</tissue>
    </source>
</reference>
<reference key="7">
    <citation type="journal article" date="2010" name="Sci. Signal.">
        <title>Quantitative phosphoproteomics reveals widespread full phosphorylation site occupancy during mitosis.</title>
        <authorList>
            <person name="Olsen J.V."/>
            <person name="Vermeulen M."/>
            <person name="Santamaria A."/>
            <person name="Kumar C."/>
            <person name="Miller M.L."/>
            <person name="Jensen L.J."/>
            <person name="Gnad F."/>
            <person name="Cox J."/>
            <person name="Jensen T.S."/>
            <person name="Nigg E.A."/>
            <person name="Brunak S."/>
            <person name="Mann M."/>
        </authorList>
    </citation>
    <scope>PHOSPHORYLATION [LARGE SCALE ANALYSIS] AT SER-21</scope>
    <scope>IDENTIFICATION BY MASS SPECTROMETRY [LARGE SCALE ANALYSIS]</scope>
    <source>
        <tissue>Cervix carcinoma</tissue>
    </source>
</reference>
<reference key="8">
    <citation type="journal article" date="2013" name="J. Proteome Res.">
        <title>Toward a comprehensive characterization of a human cancer cell phosphoproteome.</title>
        <authorList>
            <person name="Zhou H."/>
            <person name="Di Palma S."/>
            <person name="Preisinger C."/>
            <person name="Peng M."/>
            <person name="Polat A.N."/>
            <person name="Heck A.J."/>
            <person name="Mohammed S."/>
        </authorList>
    </citation>
    <scope>PHOSPHORYLATION [LARGE SCALE ANALYSIS] AT SER-18</scope>
    <scope>IDENTIFICATION BY MASS SPECTROMETRY [LARGE SCALE ANALYSIS]</scope>
    <source>
        <tissue>Cervix carcinoma</tissue>
    </source>
</reference>
<reference key="9">
    <citation type="journal article" date="2014" name="J. Proteomics">
        <title>An enzyme assisted RP-RPLC approach for in-depth analysis of human liver phosphoproteome.</title>
        <authorList>
            <person name="Bian Y."/>
            <person name="Song C."/>
            <person name="Cheng K."/>
            <person name="Dong M."/>
            <person name="Wang F."/>
            <person name="Huang J."/>
            <person name="Sun D."/>
            <person name="Wang L."/>
            <person name="Ye M."/>
            <person name="Zou H."/>
        </authorList>
    </citation>
    <scope>PHOSPHORYLATION [LARGE SCALE ANALYSIS] AT THR-98; THR-101 AND THR-103</scope>
    <scope>IDENTIFICATION BY MASS SPECTROMETRY [LARGE SCALE ANALYSIS]</scope>
    <source>
        <tissue>Liver</tissue>
    </source>
</reference>
<feature type="chain" id="PRO_0000244359" description="Centromere protein V">
    <location>
        <begin position="1"/>
        <end position="275"/>
    </location>
</feature>
<feature type="domain" description="CENP-V/GFA" evidence="2">
    <location>
        <begin position="148"/>
        <end position="260"/>
    </location>
</feature>
<feature type="region of interest" description="Disordered" evidence="3">
    <location>
        <begin position="1"/>
        <end position="109"/>
    </location>
</feature>
<feature type="compositionally biased region" description="Low complexity" evidence="3">
    <location>
        <begin position="1"/>
        <end position="10"/>
    </location>
</feature>
<feature type="compositionally biased region" description="Low complexity" evidence="3">
    <location>
        <begin position="17"/>
        <end position="51"/>
    </location>
</feature>
<feature type="compositionally biased region" description="Pro residues" evidence="3">
    <location>
        <begin position="79"/>
        <end position="100"/>
    </location>
</feature>
<feature type="binding site" evidence="2">
    <location>
        <position position="152"/>
    </location>
    <ligand>
        <name>Zn(2+)</name>
        <dbReference type="ChEBI" id="CHEBI:29105"/>
        <label>1</label>
        <note>structural</note>
    </ligand>
</feature>
<feature type="binding site" evidence="2">
    <location>
        <position position="154"/>
    </location>
    <ligand>
        <name>Zn(2+)</name>
        <dbReference type="ChEBI" id="CHEBI:29105"/>
        <label>1</label>
        <note>structural</note>
    </ligand>
</feature>
<feature type="binding site" evidence="2">
    <location>
        <position position="172"/>
    </location>
    <ligand>
        <name>Zn(2+)</name>
        <dbReference type="ChEBI" id="CHEBI:29105"/>
        <label>2</label>
        <note>catalytic</note>
    </ligand>
</feature>
<feature type="binding site" evidence="2">
    <location>
        <position position="174"/>
    </location>
    <ligand>
        <name>Zn(2+)</name>
        <dbReference type="ChEBI" id="CHEBI:29105"/>
        <label>2</label>
        <note>catalytic</note>
    </ligand>
</feature>
<feature type="binding site" evidence="2">
    <location>
        <position position="177"/>
    </location>
    <ligand>
        <name>Zn(2+)</name>
        <dbReference type="ChEBI" id="CHEBI:29105"/>
        <label>2</label>
        <note>catalytic</note>
    </ligand>
</feature>
<feature type="binding site" evidence="2">
    <location>
        <position position="216"/>
    </location>
    <ligand>
        <name>Zn(2+)</name>
        <dbReference type="ChEBI" id="CHEBI:29105"/>
        <label>1</label>
        <note>structural</note>
    </ligand>
</feature>
<feature type="binding site" evidence="2">
    <location>
        <position position="219"/>
    </location>
    <ligand>
        <name>Zn(2+)</name>
        <dbReference type="ChEBI" id="CHEBI:29105"/>
        <label>1</label>
        <note>structural</note>
    </ligand>
</feature>
<feature type="modified residue" description="Phosphoserine" evidence="12">
    <location>
        <position position="18"/>
    </location>
</feature>
<feature type="modified residue" description="Phosphoserine" evidence="10 11">
    <location>
        <position position="21"/>
    </location>
</feature>
<feature type="modified residue" description="Omega-N-methylarginine" evidence="1">
    <location>
        <position position="43"/>
    </location>
</feature>
<feature type="modified residue" description="Phosphothreonine" evidence="13">
    <location>
        <position position="98"/>
    </location>
</feature>
<feature type="modified residue" description="Phosphothreonine" evidence="13">
    <location>
        <position position="101"/>
    </location>
</feature>
<feature type="modified residue" description="Phosphothreonine" evidence="13">
    <location>
        <position position="103"/>
    </location>
</feature>
<feature type="modified residue" description="Phosphoserine" evidence="1">
    <location>
        <position position="257"/>
    </location>
</feature>
<feature type="splice variant" id="VSP_019549" description="In isoform 2." evidence="8">
    <original>MRRSRSSAAAKLRGQKRSGASGASAAPAASAAAALAPSATRTRRSASQAGSKSQAVEKPPSEKPRLRRSSPRAQEEGPGEPPPPELALLPPPPPPPPTPATPTSSASNLDLGEQRERWETFQKRQKLTSEGAAKLLLDTFEYQGLVKHTGGCHCGAVRFEVWASADLHIFDCN</original>
    <variation>MQVAAHNLEFALSFCS</variation>
    <location>
        <begin position="1"/>
        <end position="173"/>
    </location>
</feature>
<feature type="splice variant" id="VSP_019550" description="In isoform 3." evidence="6 7">
    <location>
        <begin position="18"/>
        <end position="20"/>
    </location>
</feature>
<feature type="mutagenesis site" description="Abolishes chromatin hypercondensation phenotype induced by overexpression of wild-type protein; when associated with A-177." evidence="5">
    <original>C</original>
    <variation>A</variation>
    <location>
        <position position="172"/>
    </location>
</feature>
<feature type="mutagenesis site" description="Abolishes chromatin hypercondensation phenotype induced by overexpression of wild-type protein." evidence="5">
    <original>C</original>
    <variation>A</variation>
    <location>
        <position position="174"/>
    </location>
</feature>
<feature type="mutagenesis site" description="Abolishes chromatin hypercondensation phenotype induced by overexpression of wild-type protein; when associated with A-172." evidence="5">
    <original>C</original>
    <variation>A</variation>
    <location>
        <position position="177"/>
    </location>
</feature>
<keyword id="KW-0025">Alternative splicing</keyword>
<keyword id="KW-0131">Cell cycle</keyword>
<keyword id="KW-0132">Cell division</keyword>
<keyword id="KW-0137">Centromere</keyword>
<keyword id="KW-0158">Chromosome</keyword>
<keyword id="KW-0963">Cytoplasm</keyword>
<keyword id="KW-0206">Cytoskeleton</keyword>
<keyword id="KW-0995">Kinetochore</keyword>
<keyword id="KW-0479">Metal-binding</keyword>
<keyword id="KW-0488">Methylation</keyword>
<keyword id="KW-0498">Mitosis</keyword>
<keyword id="KW-0539">Nucleus</keyword>
<keyword id="KW-0597">Phosphoprotein</keyword>
<keyword id="KW-1267">Proteomics identification</keyword>
<keyword id="KW-1185">Reference proteome</keyword>
<keyword id="KW-0862">Zinc</keyword>
<protein>
    <recommendedName>
        <fullName>Centromere protein V</fullName>
        <shortName>CENP-V</shortName>
    </recommendedName>
    <alternativeName>
        <fullName>Nuclear protein p30</fullName>
    </alternativeName>
    <alternativeName>
        <fullName>Proline-rich protein 6</fullName>
    </alternativeName>
</protein>
<proteinExistence type="evidence at protein level"/>
<name>CENPV_HUMAN</name>
<gene>
    <name type="primary">CENPV</name>
    <name type="synonym">PRR6</name>
</gene>
<evidence type="ECO:0000250" key="1">
    <source>
        <dbReference type="UniProtKB" id="Q9CXS4"/>
    </source>
</evidence>
<evidence type="ECO:0000255" key="2">
    <source>
        <dbReference type="PROSITE-ProRule" id="PRU01239"/>
    </source>
</evidence>
<evidence type="ECO:0000256" key="3">
    <source>
        <dbReference type="SAM" id="MobiDB-lite"/>
    </source>
</evidence>
<evidence type="ECO:0000269" key="4">
    <source>
    </source>
</evidence>
<evidence type="ECO:0000269" key="5">
    <source>
    </source>
</evidence>
<evidence type="ECO:0000303" key="6">
    <source>
    </source>
</evidence>
<evidence type="ECO:0000303" key="7">
    <source>
    </source>
</evidence>
<evidence type="ECO:0000303" key="8">
    <source ref="1"/>
</evidence>
<evidence type="ECO:0000305" key="9"/>
<evidence type="ECO:0007744" key="10">
    <source>
    </source>
</evidence>
<evidence type="ECO:0007744" key="11">
    <source>
    </source>
</evidence>
<evidence type="ECO:0007744" key="12">
    <source>
    </source>
</evidence>
<evidence type="ECO:0007744" key="13">
    <source>
    </source>
</evidence>
<comment type="function">
    <text evidence="5">Required for distribution of pericentromeric heterochromatin in interphase nuclei and for centromere formation and organization, chromosome alignment and cytokinesis.</text>
</comment>
<comment type="cofactor">
    <cofactor evidence="2">
        <name>Zn(2+)</name>
        <dbReference type="ChEBI" id="CHEBI:29105"/>
    </cofactor>
    <text evidence="2">Binds 2 Zn(2+) ions per subunit.</text>
</comment>
<comment type="interaction">
    <interactant intactId="EBI-1210604">
        <id>Q7Z7K6</id>
    </interactant>
    <interactant intactId="EBI-930964">
        <id>P54253</id>
        <label>ATXN1</label>
    </interactant>
    <organismsDiffer>false</organismsDiffer>
    <experiments>6</experiments>
</comment>
<comment type="interaction">
    <interactant intactId="EBI-1210604">
        <id>Q7Z7K6</id>
    </interactant>
    <interactant intactId="EBI-702390">
        <id>Q9UBB4</id>
        <label>ATXN10</label>
    </interactant>
    <organismsDiffer>false</organismsDiffer>
    <experiments>3</experiments>
</comment>
<comment type="interaction">
    <interactant intactId="EBI-1210604">
        <id>Q7Z7K6</id>
    </interactant>
    <interactant intactId="EBI-10988864">
        <id>P46379-2</id>
        <label>BAG6</label>
    </interactant>
    <organismsDiffer>false</organismsDiffer>
    <experiments>3</experiments>
</comment>
<comment type="interaction">
    <interactant intactId="EBI-1210604">
        <id>Q7Z7K6</id>
    </interactant>
    <interactant intactId="EBI-10976677">
        <id>G5E9A7</id>
        <label>DMWD</label>
    </interactant>
    <organismsDiffer>false</organismsDiffer>
    <experiments>3</experiments>
</comment>
<comment type="interaction">
    <interactant intactId="EBI-1210604">
        <id>Q7Z7K6</id>
    </interactant>
    <interactant intactId="EBI-395638">
        <id>O14645</id>
        <label>DNALI1</label>
    </interactant>
    <organismsDiffer>false</organismsDiffer>
    <experiments>3</experiments>
</comment>
<comment type="interaction">
    <interactant intactId="EBI-1210604">
        <id>Q7Z7K6</id>
    </interactant>
    <interactant intactId="EBI-8561769">
        <id>Q5SUL5</id>
        <label>HLA-A</label>
    </interactant>
    <organismsDiffer>false</organismsDiffer>
    <experiments>3</experiments>
</comment>
<comment type="interaction">
    <interactant intactId="EBI-1210604">
        <id>Q7Z7K6</id>
    </interactant>
    <interactant intactId="EBI-517086">
        <id>O43464</id>
        <label>HTRA2</label>
    </interactant>
    <organismsDiffer>false</organismsDiffer>
    <experiments>3</experiments>
</comment>
<comment type="interaction">
    <interactant intactId="EBI-1210604">
        <id>Q7Z7K6</id>
    </interactant>
    <interactant intactId="EBI-466029">
        <id>P42858</id>
        <label>HTT</label>
    </interactant>
    <organismsDiffer>false</organismsDiffer>
    <experiments>15</experiments>
</comment>
<comment type="interaction">
    <interactant intactId="EBI-1210604">
        <id>Q7Z7K6</id>
    </interactant>
    <interactant intactId="EBI-1055254">
        <id>Q8WXH2</id>
        <label>JPH3</label>
    </interactant>
    <organismsDiffer>false</organismsDiffer>
    <experiments>3</experiments>
</comment>
<comment type="interaction">
    <interactant intactId="EBI-1210604">
        <id>Q7Z7K6</id>
    </interactant>
    <interactant intactId="EBI-399080">
        <id>Q92993</id>
        <label>KAT5</label>
    </interactant>
    <organismsDiffer>false</organismsDiffer>
    <experiments>3</experiments>
</comment>
<comment type="interaction">
    <interactant intactId="EBI-1210604">
        <id>Q7Z7K6</id>
    </interactant>
    <interactant intactId="EBI-948266">
        <id>O14901</id>
        <label>KLF11</label>
    </interactant>
    <organismsDiffer>false</organismsDiffer>
    <experiments>3</experiments>
</comment>
<comment type="interaction">
    <interactant intactId="EBI-1210604">
        <id>Q7Z7K6</id>
    </interactant>
    <interactant intactId="EBI-11742507">
        <id>Q8TAP4-4</id>
        <label>LMO3</label>
    </interactant>
    <organismsDiffer>false</organismsDiffer>
    <experiments>3</experiments>
</comment>
<comment type="interaction">
    <interactant intactId="EBI-1210604">
        <id>Q7Z7K6</id>
    </interactant>
    <interactant intactId="EBI-4314821">
        <id>Q13449</id>
        <label>LSAMP</label>
    </interactant>
    <organismsDiffer>false</organismsDiffer>
    <experiments>3</experiments>
</comment>
<comment type="interaction">
    <interactant intactId="EBI-1210604">
        <id>Q7Z7K6</id>
    </interactant>
    <interactant intactId="EBI-359252">
        <id>P23284</id>
        <label>PPIB</label>
    </interactant>
    <organismsDiffer>false</organismsDiffer>
    <experiments>3</experiments>
</comment>
<comment type="interaction">
    <interactant intactId="EBI-1210604">
        <id>Q7Z7K6</id>
    </interactant>
    <interactant intactId="EBI-752074">
        <id>P41219</id>
        <label>PRPH</label>
    </interactant>
    <organismsDiffer>false</organismsDiffer>
    <experiments>3</experiments>
</comment>
<comment type="interaction">
    <interactant intactId="EBI-1210604">
        <id>Q7Z7K6</id>
    </interactant>
    <interactant intactId="EBI-9090795">
        <id>Q15047-2</id>
        <label>SETDB1</label>
    </interactant>
    <organismsDiffer>false</organismsDiffer>
    <experiments>3</experiments>
</comment>
<comment type="interaction">
    <interactant intactId="EBI-1210604">
        <id>Q7Z7K6</id>
    </interactant>
    <interactant intactId="EBI-985879">
        <id>P37840</id>
        <label>SNCA</label>
    </interactant>
    <organismsDiffer>false</organismsDiffer>
    <experiments>4</experiments>
</comment>
<comment type="interaction">
    <interactant intactId="EBI-1210604">
        <id>Q7Z7K6</id>
    </interactant>
    <interactant intactId="EBI-5235340">
        <id>Q7Z699</id>
        <label>SPRED1</label>
    </interactant>
    <organismsDiffer>false</organismsDiffer>
    <experiments>3</experiments>
</comment>
<comment type="interaction">
    <interactant intactId="EBI-1210604">
        <id>Q7Z7K6</id>
    </interactant>
    <interactant intactId="EBI-359832">
        <id>P61981</id>
        <label>YWHAG</label>
    </interactant>
    <organismsDiffer>false</organismsDiffer>
    <experiments>3</experiments>
</comment>
<comment type="subcellular location">
    <subcellularLocation>
        <location evidence="5">Chromosome</location>
        <location evidence="5">Centromere</location>
        <location evidence="5">Kinetochore</location>
    </subcellularLocation>
    <subcellularLocation>
        <location evidence="4">Nucleus</location>
    </subcellularLocation>
    <subcellularLocation>
        <location evidence="5">Cytoplasm</location>
        <location evidence="5">Cytoskeleton</location>
        <location evidence="5">Spindle</location>
    </subcellularLocation>
    <text>Enriched at the nuclear periphery and around the nucleolus (PubMed:12196509). In mitotic cells, localizes to kinetochores from prometaphase to metaphase (PubMed:18772885). At anaphase onset, transfers to the spindle midzone and then to the mid-body in telophase and cytokinesis (PubMed:18772885).</text>
</comment>
<comment type="alternative products">
    <event type="alternative splicing"/>
    <isoform>
        <id>Q7Z7K6-1</id>
        <name>1</name>
        <sequence type="displayed"/>
    </isoform>
    <isoform>
        <id>Q7Z7K6-2</id>
        <name>2</name>
        <sequence type="described" ref="VSP_019549"/>
    </isoform>
    <isoform>
        <id>Q7Z7K6-3</id>
        <name>3</name>
        <sequence type="described" ref="VSP_019550"/>
    </isoform>
</comment>
<comment type="similarity">
    <text evidence="9">Belongs to the Gfa family.</text>
</comment>
<organism>
    <name type="scientific">Homo sapiens</name>
    <name type="common">Human</name>
    <dbReference type="NCBI Taxonomy" id="9606"/>
    <lineage>
        <taxon>Eukaryota</taxon>
        <taxon>Metazoa</taxon>
        <taxon>Chordata</taxon>
        <taxon>Craniata</taxon>
        <taxon>Vertebrata</taxon>
        <taxon>Euteleostomi</taxon>
        <taxon>Mammalia</taxon>
        <taxon>Eutheria</taxon>
        <taxon>Euarchontoglires</taxon>
        <taxon>Primates</taxon>
        <taxon>Haplorrhini</taxon>
        <taxon>Catarrhini</taxon>
        <taxon>Hominidae</taxon>
        <taxon>Homo</taxon>
    </lineage>
</organism>
<sequence length="275" mass="29946">MRRSRSSAAAKLRGQKRSGASGASAAPAASAAAALAPSATRTRRSASQAGSKSQAVEKPPSEKPRLRRSSPRAQEEGPGEPPPPELALLPPPPPPPPTPATPTSSASNLDLGEQRERWETFQKRQKLTSEGAAKLLLDTFEYQGLVKHTGGCHCGAVRFEVWASADLHIFDCNCSICKKKQNRHFIVPASRFKLLKGAEHITTYTFNTHKAQHTFCKRCGVQSFYTPRSNPGGFGIAPHCLDEGTVRSMVTEEFNGSDWEKAMKEHKTIKNMSKE</sequence>